<evidence type="ECO:0000255" key="1">
    <source>
        <dbReference type="HAMAP-Rule" id="MF_01357"/>
    </source>
</evidence>
<evidence type="ECO:0000256" key="2">
    <source>
        <dbReference type="SAM" id="MobiDB-lite"/>
    </source>
</evidence>
<sequence length="251" mass="27967">MSDANNTAGDANEVNPEKDLSAENLPGQRGQGGEEIRVQRGMFGANNGGDTSGYGGLVRSVRLPGPASRPYGGWFDEVADELEGALEEQGLLPDNAIEKTVVDRGELTFHIEREHLVRVARTLRDDPALRFELCTGVSGVHYPHDKGRELHAVYHLRSITHNRLIRLEVSAPDGDPHIPSLVSVYPTNDWHERETYDFFGIVFDDHPALTRIMMPDDWQGFPQRKDYPLGGIPVEYKGAQIPAPDQRRSYS</sequence>
<dbReference type="EC" id="7.1.1.-" evidence="1"/>
<dbReference type="EMBL" id="AL939120">
    <property type="protein sequence ID" value="CAB44529.1"/>
    <property type="molecule type" value="Genomic_DNA"/>
</dbReference>
<dbReference type="PIR" id="T34622">
    <property type="entry name" value="T34622"/>
</dbReference>
<dbReference type="RefSeq" id="NP_628726.1">
    <property type="nucleotide sequence ID" value="NC_003888.3"/>
</dbReference>
<dbReference type="RefSeq" id="WP_011029733.1">
    <property type="nucleotide sequence ID" value="NZ_VNID01000017.1"/>
</dbReference>
<dbReference type="SMR" id="Q9XAQ6"/>
<dbReference type="FunCoup" id="Q9XAQ6">
    <property type="interactions" value="123"/>
</dbReference>
<dbReference type="STRING" id="100226.gene:17762209"/>
<dbReference type="PaxDb" id="100226-SCO4564"/>
<dbReference type="KEGG" id="sco:SCO4564"/>
<dbReference type="PATRIC" id="fig|100226.15.peg.4636"/>
<dbReference type="eggNOG" id="COG0852">
    <property type="taxonomic scope" value="Bacteria"/>
</dbReference>
<dbReference type="HOGENOM" id="CLU_042628_4_0_11"/>
<dbReference type="InParanoid" id="Q9XAQ6"/>
<dbReference type="OrthoDB" id="9803286at2"/>
<dbReference type="PhylomeDB" id="Q9XAQ6"/>
<dbReference type="Proteomes" id="UP000001973">
    <property type="component" value="Chromosome"/>
</dbReference>
<dbReference type="GO" id="GO:0005886">
    <property type="term" value="C:plasma membrane"/>
    <property type="evidence" value="ECO:0007669"/>
    <property type="project" value="UniProtKB-SubCell"/>
</dbReference>
<dbReference type="GO" id="GO:0008137">
    <property type="term" value="F:NADH dehydrogenase (ubiquinone) activity"/>
    <property type="evidence" value="ECO:0007669"/>
    <property type="project" value="InterPro"/>
</dbReference>
<dbReference type="GO" id="GO:0050136">
    <property type="term" value="F:NADH:ubiquinone reductase (non-electrogenic) activity"/>
    <property type="evidence" value="ECO:0007669"/>
    <property type="project" value="UniProtKB-UniRule"/>
</dbReference>
<dbReference type="GO" id="GO:0048038">
    <property type="term" value="F:quinone binding"/>
    <property type="evidence" value="ECO:0007669"/>
    <property type="project" value="UniProtKB-KW"/>
</dbReference>
<dbReference type="Gene3D" id="3.30.460.80">
    <property type="entry name" value="NADH:ubiquinone oxidoreductase, 30kDa subunit"/>
    <property type="match status" value="1"/>
</dbReference>
<dbReference type="HAMAP" id="MF_01357">
    <property type="entry name" value="NDH1_NuoC"/>
    <property type="match status" value="1"/>
</dbReference>
<dbReference type="InterPro" id="IPR010218">
    <property type="entry name" value="NADH_DH_suC"/>
</dbReference>
<dbReference type="InterPro" id="IPR037232">
    <property type="entry name" value="NADH_quin_OxRdtase_su_C/D-like"/>
</dbReference>
<dbReference type="InterPro" id="IPR001268">
    <property type="entry name" value="NADH_UbQ_OxRdtase_30kDa_su"/>
</dbReference>
<dbReference type="NCBIfam" id="TIGR01961">
    <property type="entry name" value="NuoC_fam"/>
    <property type="match status" value="1"/>
</dbReference>
<dbReference type="NCBIfam" id="NF005856">
    <property type="entry name" value="PRK07785.1"/>
    <property type="match status" value="1"/>
</dbReference>
<dbReference type="PANTHER" id="PTHR10884:SF14">
    <property type="entry name" value="NADH DEHYDROGENASE [UBIQUINONE] IRON-SULFUR PROTEIN 3, MITOCHONDRIAL"/>
    <property type="match status" value="1"/>
</dbReference>
<dbReference type="PANTHER" id="PTHR10884">
    <property type="entry name" value="NADH DEHYDROGENASE UBIQUINONE IRON-SULFUR PROTEIN 3"/>
    <property type="match status" value="1"/>
</dbReference>
<dbReference type="Pfam" id="PF00329">
    <property type="entry name" value="Complex1_30kDa"/>
    <property type="match status" value="1"/>
</dbReference>
<dbReference type="SUPFAM" id="SSF143243">
    <property type="entry name" value="Nqo5-like"/>
    <property type="match status" value="1"/>
</dbReference>
<protein>
    <recommendedName>
        <fullName evidence="1">NADH-quinone oxidoreductase subunit C</fullName>
        <ecNumber evidence="1">7.1.1.-</ecNumber>
    </recommendedName>
    <alternativeName>
        <fullName evidence="1">NADH dehydrogenase I subunit C</fullName>
    </alternativeName>
    <alternativeName>
        <fullName evidence="1">NDH-1 subunit C</fullName>
    </alternativeName>
</protein>
<proteinExistence type="inferred from homology"/>
<name>NUOC_STRCO</name>
<feature type="chain" id="PRO_0000358202" description="NADH-quinone oxidoreductase subunit C">
    <location>
        <begin position="1"/>
        <end position="251"/>
    </location>
</feature>
<feature type="region of interest" description="Disordered" evidence="2">
    <location>
        <begin position="1"/>
        <end position="34"/>
    </location>
</feature>
<keyword id="KW-1003">Cell membrane</keyword>
<keyword id="KW-0472">Membrane</keyword>
<keyword id="KW-0520">NAD</keyword>
<keyword id="KW-0874">Quinone</keyword>
<keyword id="KW-1185">Reference proteome</keyword>
<keyword id="KW-1278">Translocase</keyword>
<keyword id="KW-0813">Transport</keyword>
<reference key="1">
    <citation type="journal article" date="2002" name="Nature">
        <title>Complete genome sequence of the model actinomycete Streptomyces coelicolor A3(2).</title>
        <authorList>
            <person name="Bentley S.D."/>
            <person name="Chater K.F."/>
            <person name="Cerdeno-Tarraga A.-M."/>
            <person name="Challis G.L."/>
            <person name="Thomson N.R."/>
            <person name="James K.D."/>
            <person name="Harris D.E."/>
            <person name="Quail M.A."/>
            <person name="Kieser H."/>
            <person name="Harper D."/>
            <person name="Bateman A."/>
            <person name="Brown S."/>
            <person name="Chandra G."/>
            <person name="Chen C.W."/>
            <person name="Collins M."/>
            <person name="Cronin A."/>
            <person name="Fraser A."/>
            <person name="Goble A."/>
            <person name="Hidalgo J."/>
            <person name="Hornsby T."/>
            <person name="Howarth S."/>
            <person name="Huang C.-H."/>
            <person name="Kieser T."/>
            <person name="Larke L."/>
            <person name="Murphy L.D."/>
            <person name="Oliver K."/>
            <person name="O'Neil S."/>
            <person name="Rabbinowitsch E."/>
            <person name="Rajandream M.A."/>
            <person name="Rutherford K.M."/>
            <person name="Rutter S."/>
            <person name="Seeger K."/>
            <person name="Saunders D."/>
            <person name="Sharp S."/>
            <person name="Squares R."/>
            <person name="Squares S."/>
            <person name="Taylor K."/>
            <person name="Warren T."/>
            <person name="Wietzorrek A."/>
            <person name="Woodward J.R."/>
            <person name="Barrell B.G."/>
            <person name="Parkhill J."/>
            <person name="Hopwood D.A."/>
        </authorList>
    </citation>
    <scope>NUCLEOTIDE SEQUENCE [LARGE SCALE GENOMIC DNA]</scope>
    <source>
        <strain>ATCC BAA-471 / A3(2) / M145</strain>
    </source>
</reference>
<gene>
    <name evidence="1" type="primary">nuoC</name>
    <name type="ordered locus">SCO4564</name>
    <name type="ORF">SCD16A.19c</name>
</gene>
<comment type="function">
    <text evidence="1">NDH-1 shuttles electrons from NADH, via FMN and iron-sulfur (Fe-S) centers, to quinones in the respiratory chain. The immediate electron acceptor for the enzyme in this species is believed to be a menaquinone. Couples the redox reaction to proton translocation (for every two electrons transferred, four hydrogen ions are translocated across the cytoplasmic membrane), and thus conserves the redox energy in a proton gradient.</text>
</comment>
<comment type="catalytic activity">
    <reaction evidence="1">
        <text>a quinone + NADH + 5 H(+)(in) = a quinol + NAD(+) + 4 H(+)(out)</text>
        <dbReference type="Rhea" id="RHEA:57888"/>
        <dbReference type="ChEBI" id="CHEBI:15378"/>
        <dbReference type="ChEBI" id="CHEBI:24646"/>
        <dbReference type="ChEBI" id="CHEBI:57540"/>
        <dbReference type="ChEBI" id="CHEBI:57945"/>
        <dbReference type="ChEBI" id="CHEBI:132124"/>
    </reaction>
</comment>
<comment type="subunit">
    <text evidence="1">NDH-1 is composed of 14 different subunits. Subunits NuoB, C, D, E, F, and G constitute the peripheral sector of the complex.</text>
</comment>
<comment type="subcellular location">
    <subcellularLocation>
        <location evidence="1">Cell membrane</location>
        <topology evidence="1">Peripheral membrane protein</topology>
        <orientation evidence="1">Cytoplasmic side</orientation>
    </subcellularLocation>
</comment>
<comment type="similarity">
    <text evidence="1">Belongs to the complex I 30 kDa subunit family.</text>
</comment>
<accession>Q9XAQ6</accession>
<organism>
    <name type="scientific">Streptomyces coelicolor (strain ATCC BAA-471 / A3(2) / M145)</name>
    <dbReference type="NCBI Taxonomy" id="100226"/>
    <lineage>
        <taxon>Bacteria</taxon>
        <taxon>Bacillati</taxon>
        <taxon>Actinomycetota</taxon>
        <taxon>Actinomycetes</taxon>
        <taxon>Kitasatosporales</taxon>
        <taxon>Streptomycetaceae</taxon>
        <taxon>Streptomyces</taxon>
        <taxon>Streptomyces albidoflavus group</taxon>
    </lineage>
</organism>